<evidence type="ECO:0000269" key="1">
    <source>
    </source>
</evidence>
<evidence type="ECO:0000269" key="2">
    <source>
    </source>
</evidence>
<evidence type="ECO:0000269" key="3">
    <source>
    </source>
</evidence>
<evidence type="ECO:0000305" key="4"/>
<evidence type="ECO:0000305" key="5">
    <source>
    </source>
</evidence>
<evidence type="ECO:0000305" key="6">
    <source>
    </source>
</evidence>
<evidence type="ECO:0007744" key="7">
    <source>
        <dbReference type="PDB" id="3OZ2"/>
    </source>
</evidence>
<evidence type="ECO:0007829" key="8">
    <source>
        <dbReference type="PDB" id="3OZ2"/>
    </source>
</evidence>
<sequence length="396" mass="43353">METYDVLVVGGGPGGSTAARYAAKYGLKTLMIEKRPEIGSPVRCGEGLSKGILNEADIKADRSFIANEVKGARIYGPSEKRPIILQSEKAGNEVGYVLERDKFDKHLAALAAKAGADVWVKSPALGVIKENGKVAGAKIRHNNEIVDVRAKMVIAADGFESEFGRWAGLKSVILARNDIISALQYRMINVDVDPDYTDFYLGSIAPAGYIWVFPKGEGMANVGIGSSINWIHNRFELKNYLDRFIENHPGLKKGQDIQLVTGGVSVSKVKMPITMPGLMLVGDAARLIDPITGGGIANAIVSGMYAAQVTKEAIESNDYSPQMMQKYEKLIKERFERKHLRNWVAKEKLAMLSDDTLDKLVDIVSEQVLTTISVEAILKAIAEKYPEVVKELEDLI</sequence>
<proteinExistence type="evidence at protein level"/>
<accession>Q9HKS9</accession>
<protein>
    <recommendedName>
        <fullName>Digeranylgeranylglycerophospholipid reductase</fullName>
        <shortName>DGGGPL reductase</shortName>
        <ecNumber evidence="1">1.3.1.101</ecNumber>
    </recommendedName>
    <alternativeName>
        <fullName>2,3-bis-O-geranylgeranylglyceryl phosphate reductase</fullName>
    </alternativeName>
    <alternativeName>
        <fullName>Geranylgeranyl reductase</fullName>
        <shortName>GGR</shortName>
    </alternativeName>
</protein>
<dbReference type="EC" id="1.3.1.101" evidence="1"/>
<dbReference type="EMBL" id="AL445064">
    <property type="protein sequence ID" value="CAC11656.1"/>
    <property type="status" value="ALT_INIT"/>
    <property type="molecule type" value="Genomic_DNA"/>
</dbReference>
<dbReference type="RefSeq" id="WP_010900941.1">
    <property type="nucleotide sequence ID" value="NC_002578.1"/>
</dbReference>
<dbReference type="PDB" id="3OZ2">
    <property type="method" value="X-ray"/>
    <property type="resolution" value="1.60 A"/>
    <property type="chains" value="A=1-396"/>
</dbReference>
<dbReference type="PDBsum" id="3OZ2"/>
<dbReference type="SMR" id="Q9HKS9"/>
<dbReference type="STRING" id="273075.gene:9571734"/>
<dbReference type="PaxDb" id="273075-Ta0516m"/>
<dbReference type="EnsemblBacteria" id="CAC11656">
    <property type="protein sequence ID" value="CAC11656"/>
    <property type="gene ID" value="CAC11656"/>
</dbReference>
<dbReference type="KEGG" id="tac:Ta0516"/>
<dbReference type="eggNOG" id="arCOG00570">
    <property type="taxonomic scope" value="Archaea"/>
</dbReference>
<dbReference type="HOGENOM" id="CLU_024648_0_0_2"/>
<dbReference type="InParanoid" id="Q9HKS9"/>
<dbReference type="OrthoDB" id="6062at2157"/>
<dbReference type="BioCyc" id="MetaCyc:MONOMER-17979"/>
<dbReference type="BRENDA" id="1.3.1.101">
    <property type="organism ID" value="6324"/>
</dbReference>
<dbReference type="BRENDA" id="1.3.7.11">
    <property type="organism ID" value="6324"/>
</dbReference>
<dbReference type="UniPathway" id="UPA00940"/>
<dbReference type="EvolutionaryTrace" id="Q9HKS9"/>
<dbReference type="Proteomes" id="UP000001024">
    <property type="component" value="Chromosome"/>
</dbReference>
<dbReference type="GO" id="GO:0005886">
    <property type="term" value="C:plasma membrane"/>
    <property type="evidence" value="ECO:0007669"/>
    <property type="project" value="UniProtKB-SubCell"/>
</dbReference>
<dbReference type="GO" id="GO:0050660">
    <property type="term" value="F:flavin adenine dinucleotide binding"/>
    <property type="evidence" value="ECO:0007669"/>
    <property type="project" value="UniProtKB-UniRule"/>
</dbReference>
<dbReference type="GO" id="GO:0045550">
    <property type="term" value="F:geranylgeranyl reductase activity"/>
    <property type="evidence" value="ECO:0007669"/>
    <property type="project" value="InterPro"/>
</dbReference>
<dbReference type="GO" id="GO:0051287">
    <property type="term" value="F:NAD binding"/>
    <property type="evidence" value="ECO:0007669"/>
    <property type="project" value="UniProtKB-UniRule"/>
</dbReference>
<dbReference type="GO" id="GO:0050661">
    <property type="term" value="F:NADP binding"/>
    <property type="evidence" value="ECO:0007669"/>
    <property type="project" value="UniProtKB-UniRule"/>
</dbReference>
<dbReference type="GO" id="GO:0016628">
    <property type="term" value="F:oxidoreductase activity, acting on the CH-CH group of donors, NAD or NADP as acceptor"/>
    <property type="evidence" value="ECO:0007669"/>
    <property type="project" value="UniProtKB-UniRule"/>
</dbReference>
<dbReference type="GO" id="GO:0046474">
    <property type="term" value="P:glycerophospholipid biosynthetic process"/>
    <property type="evidence" value="ECO:0007669"/>
    <property type="project" value="UniProtKB-UniRule"/>
</dbReference>
<dbReference type="GO" id="GO:0046467">
    <property type="term" value="P:membrane lipid biosynthetic process"/>
    <property type="evidence" value="ECO:0007669"/>
    <property type="project" value="InterPro"/>
</dbReference>
<dbReference type="Gene3D" id="3.30.9.10">
    <property type="entry name" value="D-Amino Acid Oxidase, subunit A, domain 2"/>
    <property type="match status" value="1"/>
</dbReference>
<dbReference type="Gene3D" id="3.50.50.60">
    <property type="entry name" value="FAD/NAD(P)-binding domain"/>
    <property type="match status" value="1"/>
</dbReference>
<dbReference type="HAMAP" id="MF_01287">
    <property type="entry name" value="DGGGPL_reductase"/>
    <property type="match status" value="1"/>
</dbReference>
<dbReference type="InterPro" id="IPR023590">
    <property type="entry name" value="DGGGPL_reductase"/>
</dbReference>
<dbReference type="InterPro" id="IPR054984">
    <property type="entry name" value="DGGPL_reductase"/>
</dbReference>
<dbReference type="InterPro" id="IPR036188">
    <property type="entry name" value="FAD/NAD-bd_sf"/>
</dbReference>
<dbReference type="InterPro" id="IPR023753">
    <property type="entry name" value="FAD/NAD-binding_dom"/>
</dbReference>
<dbReference type="InterPro" id="IPR011777">
    <property type="entry name" value="Geranylgeranyl_Rdtase_fam"/>
</dbReference>
<dbReference type="InterPro" id="IPR050407">
    <property type="entry name" value="Geranylgeranyl_reductase"/>
</dbReference>
<dbReference type="InterPro" id="IPR054715">
    <property type="entry name" value="GGR_cat"/>
</dbReference>
<dbReference type="NCBIfam" id="NF041160">
    <property type="entry name" value="DGGPL_Thplmales"/>
    <property type="match status" value="1"/>
</dbReference>
<dbReference type="NCBIfam" id="TIGR02032">
    <property type="entry name" value="GG-red-SF"/>
    <property type="match status" value="1"/>
</dbReference>
<dbReference type="PANTHER" id="PTHR42685:SF18">
    <property type="entry name" value="DIGERANYLGERANYLGLYCEROPHOSPHOLIPID REDUCTASE"/>
    <property type="match status" value="1"/>
</dbReference>
<dbReference type="PANTHER" id="PTHR42685">
    <property type="entry name" value="GERANYLGERANYL DIPHOSPHATE REDUCTASE"/>
    <property type="match status" value="1"/>
</dbReference>
<dbReference type="Pfam" id="PF22578">
    <property type="entry name" value="GGR_cat"/>
    <property type="match status" value="1"/>
</dbReference>
<dbReference type="Pfam" id="PF07992">
    <property type="entry name" value="Pyr_redox_2"/>
    <property type="match status" value="1"/>
</dbReference>
<dbReference type="PRINTS" id="PR00420">
    <property type="entry name" value="RNGMNOXGNASE"/>
</dbReference>
<dbReference type="SUPFAM" id="SSF51905">
    <property type="entry name" value="FAD/NAD(P)-binding domain"/>
    <property type="match status" value="1"/>
</dbReference>
<feature type="chain" id="PRO_0000350723" description="Digeranylgeranylglycerophospholipid reductase">
    <location>
        <begin position="1"/>
        <end position="396"/>
    </location>
</feature>
<feature type="binding site" evidence="3 7">
    <location>
        <position position="14"/>
    </location>
    <ligand>
        <name>FAD</name>
        <dbReference type="ChEBI" id="CHEBI:57692"/>
    </ligand>
</feature>
<feature type="binding site" evidence="3 7">
    <location>
        <position position="33"/>
    </location>
    <ligand>
        <name>FAD</name>
        <dbReference type="ChEBI" id="CHEBI:57692"/>
    </ligand>
</feature>
<feature type="binding site" evidence="3 7">
    <location>
        <position position="44"/>
    </location>
    <ligand>
        <name>FAD</name>
        <dbReference type="ChEBI" id="CHEBI:57692"/>
    </ligand>
</feature>
<feature type="binding site" evidence="3 7">
    <location>
        <position position="45"/>
    </location>
    <ligand>
        <name>FAD</name>
        <dbReference type="ChEBI" id="CHEBI:57692"/>
    </ligand>
</feature>
<feature type="binding site" evidence="3 7">
    <location>
        <position position="47"/>
    </location>
    <ligand>
        <name>FAD</name>
        <dbReference type="ChEBI" id="CHEBI:57692"/>
    </ligand>
</feature>
<feature type="binding site" evidence="3 7">
    <location>
        <position position="100"/>
    </location>
    <ligand>
        <name>FAD</name>
        <dbReference type="ChEBI" id="CHEBI:57692"/>
    </ligand>
</feature>
<feature type="binding site" evidence="3 7">
    <location>
        <position position="124"/>
    </location>
    <ligand>
        <name>FAD</name>
        <dbReference type="ChEBI" id="CHEBI:57692"/>
    </ligand>
</feature>
<feature type="binding site" evidence="3 7">
    <location>
        <position position="162"/>
    </location>
    <ligand>
        <name>FAD</name>
        <dbReference type="ChEBI" id="CHEBI:57692"/>
    </ligand>
</feature>
<feature type="binding site" evidence="3 7">
    <location>
        <position position="283"/>
    </location>
    <ligand>
        <name>FAD</name>
        <dbReference type="ChEBI" id="CHEBI:57692"/>
    </ligand>
</feature>
<feature type="binding site" evidence="3 7">
    <location>
        <position position="295"/>
    </location>
    <ligand>
        <name>FAD</name>
        <dbReference type="ChEBI" id="CHEBI:57692"/>
    </ligand>
</feature>
<feature type="binding site" evidence="3 7">
    <location>
        <position position="296"/>
    </location>
    <ligand>
        <name>FAD</name>
        <dbReference type="ChEBI" id="CHEBI:57692"/>
    </ligand>
</feature>
<feature type="binding site" evidence="6 7">
    <location>
        <position position="338"/>
    </location>
    <ligand>
        <name>a 2,3-bis-O-(geranylgeranyl)-sn-glycerol 1-phospholipid</name>
        <dbReference type="ChEBI" id="CHEBI:138140"/>
    </ligand>
</feature>
<feature type="binding site" evidence="6 7">
    <location>
        <position position="374"/>
    </location>
    <ligand>
        <name>a 2,3-bis-O-(geranylgeranyl)-sn-glycerol 1-phospholipid</name>
        <dbReference type="ChEBI" id="CHEBI:138140"/>
    </ligand>
</feature>
<feature type="strand" evidence="8">
    <location>
        <begin position="1"/>
        <end position="9"/>
    </location>
</feature>
<feature type="helix" evidence="8">
    <location>
        <begin position="13"/>
        <end position="24"/>
    </location>
</feature>
<feature type="strand" evidence="8">
    <location>
        <begin position="29"/>
        <end position="32"/>
    </location>
</feature>
<feature type="strand" evidence="8">
    <location>
        <begin position="34"/>
        <end position="37"/>
    </location>
</feature>
<feature type="strand" evidence="8">
    <location>
        <begin position="47"/>
        <end position="49"/>
    </location>
</feature>
<feature type="helix" evidence="8">
    <location>
        <begin position="51"/>
        <end position="55"/>
    </location>
</feature>
<feature type="turn" evidence="8">
    <location>
        <begin position="62"/>
        <end position="64"/>
    </location>
</feature>
<feature type="strand" evidence="8">
    <location>
        <begin position="65"/>
        <end position="75"/>
    </location>
</feature>
<feature type="strand" evidence="8">
    <location>
        <begin position="83"/>
        <end position="86"/>
    </location>
</feature>
<feature type="strand" evidence="8">
    <location>
        <begin position="88"/>
        <end position="91"/>
    </location>
</feature>
<feature type="strand" evidence="8">
    <location>
        <begin position="95"/>
        <end position="98"/>
    </location>
</feature>
<feature type="helix" evidence="8">
    <location>
        <begin position="100"/>
        <end position="114"/>
    </location>
</feature>
<feature type="strand" evidence="8">
    <location>
        <begin position="117"/>
        <end position="121"/>
    </location>
</feature>
<feature type="strand" evidence="8">
    <location>
        <begin position="124"/>
        <end position="130"/>
    </location>
</feature>
<feature type="strand" evidence="8">
    <location>
        <begin position="133"/>
        <end position="141"/>
    </location>
</feature>
<feature type="strand" evidence="8">
    <location>
        <begin position="144"/>
        <end position="155"/>
    </location>
</feature>
<feature type="helix" evidence="8">
    <location>
        <begin position="162"/>
        <end position="167"/>
    </location>
</feature>
<feature type="helix" evidence="8">
    <location>
        <begin position="170"/>
        <end position="172"/>
    </location>
</feature>
<feature type="helix" evidence="8">
    <location>
        <begin position="176"/>
        <end position="178"/>
    </location>
</feature>
<feature type="strand" evidence="8">
    <location>
        <begin position="179"/>
        <end position="189"/>
    </location>
</feature>
<feature type="strand" evidence="8">
    <location>
        <begin position="196"/>
        <end position="200"/>
    </location>
</feature>
<feature type="strand" evidence="8">
    <location>
        <begin position="208"/>
        <end position="216"/>
    </location>
</feature>
<feature type="strand" evidence="8">
    <location>
        <begin position="219"/>
        <end position="227"/>
    </location>
</feature>
<feature type="turn" evidence="8">
    <location>
        <begin position="228"/>
        <end position="230"/>
    </location>
</feature>
<feature type="helix" evidence="8">
    <location>
        <begin position="234"/>
        <end position="246"/>
    </location>
</feature>
<feature type="helix" evidence="8">
    <location>
        <begin position="249"/>
        <end position="252"/>
    </location>
</feature>
<feature type="strand" evidence="8">
    <location>
        <begin position="254"/>
        <end position="265"/>
    </location>
</feature>
<feature type="strand" evidence="8">
    <location>
        <begin position="278"/>
        <end position="280"/>
    </location>
</feature>
<feature type="helix" evidence="8">
    <location>
        <begin position="282"/>
        <end position="285"/>
    </location>
</feature>
<feature type="turn" evidence="8">
    <location>
        <begin position="290"/>
        <end position="292"/>
    </location>
</feature>
<feature type="helix" evidence="8">
    <location>
        <begin position="296"/>
        <end position="316"/>
    </location>
</feature>
<feature type="helix" evidence="8">
    <location>
        <begin position="321"/>
        <end position="350"/>
    </location>
</feature>
<feature type="helix" evidence="8">
    <location>
        <begin position="354"/>
        <end position="364"/>
    </location>
</feature>
<feature type="helix" evidence="8">
    <location>
        <begin position="374"/>
        <end position="384"/>
    </location>
</feature>
<feature type="helix" evidence="8">
    <location>
        <begin position="386"/>
        <end position="395"/>
    </location>
</feature>
<comment type="function">
    <text evidence="1 2 4">Is involved in the reduction of 2,3-digeranylgeranylglycerophospholipids (unsaturated archaeols) into 2,3-diphytanylglycerophospholipids (saturated archaeols) in the biosynthesis of archaeal membrane lipids. Catalyzes the formation of archaetidic acid (2,3-di-O-phytanyl-sn-glyceryl phosphate) from 2,3-di-O-geranylgeranylglyceryl phosphate (DGGGP) via the hydrogenation of each double bond of the isoprenoid chains. Can use both NADH and NADPH as electron donors. Also catalyzes the reduction of 2,3-di-O-geranylgeranylglyceryl phosphate analogs such as 2,3-di-O-phytyl-sn-glyceryl phosphate (DPHGP), 3-O-(2,3-di-O-phytyl-sn-glycero-phospho)-sn-glycerol (DPHGPG) and 2,3-di-O-phytyl-sn-glycero-phosphoethanolamine (DPHGPE). Is not active toward 2,3-di-O-geranylgeranylglycerol (PubMed:16788058). Is also probably able to reduce double bonds of geranyl groups in CDP-2,3-bis-O-(geranylgeranyl)-sn-glycerol and archaetidylserine, thus acting at various stages in the biosynthesis of archaeal membrane lipids (Probable).</text>
</comment>
<comment type="catalytic activity">
    <reaction evidence="1">
        <text>2,3-bis-O-(phytanyl)-sn-glycerol 1-phosphate + 8 NADP(+) = 2,3-bis-O-(geranylgeranyl)-sn-glycerol 1-phosphate + 8 NADPH + 8 H(+)</text>
        <dbReference type="Rhea" id="RHEA:36035"/>
        <dbReference type="ChEBI" id="CHEBI:15378"/>
        <dbReference type="ChEBI" id="CHEBI:57783"/>
        <dbReference type="ChEBI" id="CHEBI:58349"/>
        <dbReference type="ChEBI" id="CHEBI:58837"/>
        <dbReference type="ChEBI" id="CHEBI:73125"/>
        <dbReference type="EC" id="1.3.1.101"/>
    </reaction>
    <physiologicalReaction direction="right-to-left" evidence="5">
        <dbReference type="Rhea" id="RHEA:36037"/>
    </physiologicalReaction>
</comment>
<comment type="catalytic activity">
    <reaction evidence="1">
        <text>2,3-bis-O-(phytanyl)-sn-glycerol 1-phosphate + 8 NAD(+) = 2,3-bis-O-(geranylgeranyl)-sn-glycerol 1-phosphate + 8 NADH + 8 H(+)</text>
        <dbReference type="Rhea" id="RHEA:36039"/>
        <dbReference type="ChEBI" id="CHEBI:15378"/>
        <dbReference type="ChEBI" id="CHEBI:57540"/>
        <dbReference type="ChEBI" id="CHEBI:57945"/>
        <dbReference type="ChEBI" id="CHEBI:58837"/>
        <dbReference type="ChEBI" id="CHEBI:73125"/>
        <dbReference type="EC" id="1.3.1.101"/>
    </reaction>
    <physiologicalReaction direction="right-to-left" evidence="5">
        <dbReference type="Rhea" id="RHEA:36041"/>
    </physiologicalReaction>
</comment>
<comment type="catalytic activity">
    <reaction evidence="1">
        <text>a 2,3-bis-O-phytanyl-sn-glycerol 1-phospholipid + 8 A = a 2,3-bis-O-(geranylgeranyl)-sn-glycerol 1-phospholipid + 8 AH2</text>
        <dbReference type="Rhea" id="RHEA:64376"/>
        <dbReference type="ChEBI" id="CHEBI:13193"/>
        <dbReference type="ChEBI" id="CHEBI:17499"/>
        <dbReference type="ChEBI" id="CHEBI:138139"/>
        <dbReference type="ChEBI" id="CHEBI:138140"/>
    </reaction>
    <physiologicalReaction direction="right-to-left" evidence="5">
        <dbReference type="Rhea" id="RHEA:64378"/>
    </physiologicalReaction>
</comment>
<comment type="catalytic activity">
    <reaction evidence="4">
        <text>CDP-2,3-bis-O-(geranylgeranyl)-sn-glycerol + 8 AH2 = CDP-2,3-bis-O-(phytanyl)-sn-glycerol + 8 A</text>
        <dbReference type="Rhea" id="RHEA:84207"/>
        <dbReference type="ChEBI" id="CHEBI:13193"/>
        <dbReference type="ChEBI" id="CHEBI:17499"/>
        <dbReference type="ChEBI" id="CHEBI:58838"/>
        <dbReference type="ChEBI" id="CHEBI:74004"/>
    </reaction>
    <physiologicalReaction direction="left-to-right" evidence="4">
        <dbReference type="Rhea" id="RHEA:84208"/>
    </physiologicalReaction>
</comment>
<comment type="catalytic activity">
    <reaction evidence="4">
        <text>archaetidylserine + 8 AH2 = 2,3-bis-O-phytanyl-sn-glycero-3-phospho-L-serine + 8 A</text>
        <dbReference type="Rhea" id="RHEA:84215"/>
        <dbReference type="ChEBI" id="CHEBI:13193"/>
        <dbReference type="ChEBI" id="CHEBI:17499"/>
        <dbReference type="ChEBI" id="CHEBI:71517"/>
        <dbReference type="ChEBI" id="CHEBI:74853"/>
    </reaction>
    <physiologicalReaction direction="left-to-right" evidence="4">
        <dbReference type="Rhea" id="RHEA:84216"/>
    </physiologicalReaction>
</comment>
<comment type="cofactor">
    <cofactor evidence="1 2 3">
        <name>FAD</name>
        <dbReference type="ChEBI" id="CHEBI:57692"/>
    </cofactor>
    <text evidence="1 2 3">Binds 1 FAD per subunit.</text>
</comment>
<comment type="pathway">
    <text>Membrane lipid metabolism; glycerophospholipid metabolism.</text>
</comment>
<comment type="subunit">
    <text evidence="3">Monomer.</text>
</comment>
<comment type="subcellular location">
    <subcellularLocation>
        <location evidence="1">Cell membrane</location>
    </subcellularLocation>
</comment>
<comment type="miscellaneous">
    <text>Reduction reaction proceeds via syn addition of hydrogen for double bonds.</text>
</comment>
<comment type="similarity">
    <text evidence="4">Belongs to the geranylgeranyl reductase family. DGGGPL reductase subfamily.</text>
</comment>
<comment type="sequence caution" evidence="4">
    <conflict type="erroneous initiation">
        <sequence resource="EMBL-CDS" id="CAC11656"/>
    </conflict>
</comment>
<keyword id="KW-0002">3D-structure</keyword>
<keyword id="KW-1003">Cell membrane</keyword>
<keyword id="KW-0903">Direct protein sequencing</keyword>
<keyword id="KW-0274">FAD</keyword>
<keyword id="KW-0285">Flavoprotein</keyword>
<keyword id="KW-0444">Lipid biosynthesis</keyword>
<keyword id="KW-0443">Lipid metabolism</keyword>
<keyword id="KW-0472">Membrane</keyword>
<keyword id="KW-0520">NAD</keyword>
<keyword id="KW-0521">NADP</keyword>
<keyword id="KW-0560">Oxidoreductase</keyword>
<keyword id="KW-0594">Phospholipid biosynthesis</keyword>
<keyword id="KW-1208">Phospholipid metabolism</keyword>
<keyword id="KW-1185">Reference proteome</keyword>
<reference key="1">
    <citation type="journal article" date="2000" name="Nature">
        <title>The genome sequence of the thermoacidophilic scavenger Thermoplasma acidophilum.</title>
        <authorList>
            <person name="Ruepp A."/>
            <person name="Graml W."/>
            <person name="Santos-Martinez M.-L."/>
            <person name="Koretke K.K."/>
            <person name="Volker C."/>
            <person name="Mewes H.-W."/>
            <person name="Frishman D."/>
            <person name="Stocker S."/>
            <person name="Lupas A.N."/>
            <person name="Baumeister W."/>
        </authorList>
    </citation>
    <scope>NUCLEOTIDE SEQUENCE [LARGE SCALE GENOMIC DNA]</scope>
    <source>
        <strain>ATCC 25905 / DSM 1728 / JCM 9062 / NBRC 15155 / AMRC-C165</strain>
    </source>
</reference>
<reference key="2">
    <citation type="journal article" date="2006" name="J. Biochem.">
        <title>Biosynthesis of archaeal membrane lipids: digeranylgeranylglycerophospholipid reductase of the thermoacidophilic archaeon Thermoplasma acidophilum.</title>
        <authorList>
            <person name="Nishimura Y."/>
            <person name="Eguchi T."/>
        </authorList>
    </citation>
    <scope>PROTEIN SEQUENCE OF 1-20</scope>
    <scope>FUNCTION</scope>
    <scope>CATALYTIC ACTIVITY</scope>
    <scope>COFACTOR</scope>
    <scope>SUBSTRATE SPECIFICITY</scope>
    <scope>SUBCELLULAR LOCATION</scope>
    <source>
        <strain>ATCC 25905 / DSM 1728 / JCM 9062 / NBRC 15155 / AMRC-C165</strain>
    </source>
</reference>
<reference key="3">
    <citation type="journal article" date="2007" name="Bioorg. Chem.">
        <title>Stereochemistry of reduction in digeranylgeranylglycerophospholipid reductase involved in the biosynthesis of archaeal membrane lipids from Thermoplasma acidophilum.</title>
        <authorList>
            <person name="Nishimura Y."/>
            <person name="Eguchi T."/>
        </authorList>
    </citation>
    <scope>FUNCTION</scope>
    <scope>COFACTOR</scope>
    <scope>REACTION STEREOCHEMISTRY</scope>
    <source>
        <strain>ATCC 25905 / DSM 1728 / JCM 9062 / NBRC 15155 / AMRC-C165</strain>
    </source>
</reference>
<reference key="4">
    <citation type="journal article" date="2010" name="J. Mol. Biol.">
        <title>Insights into substrate specificity of geranylgeranyl reductases revealed by the structure of digeranylgeranylglycerophospholipid reductase, an essential enzyme in the biosynthesis of archaeal membrane lipids.</title>
        <authorList>
            <person name="Xu Q."/>
            <person name="Eguchi T."/>
            <person name="Mathews I.I."/>
            <person name="Rife C.L."/>
            <person name="Chiu H.J."/>
            <person name="Farr C.L."/>
            <person name="Feuerhelm J."/>
            <person name="Jaroszewski L."/>
            <person name="Klock H.E."/>
            <person name="Knuth M.W."/>
            <person name="Miller M.D."/>
            <person name="Weekes D."/>
            <person name="Elsliger M.A."/>
            <person name="Deacon A.M."/>
            <person name="Godzik A."/>
            <person name="Lesley S.A."/>
            <person name="Wilson I.A."/>
        </authorList>
    </citation>
    <scope>X-RAY CRYSTALLOGRAPHY (1.6 ANGSTROMS) IN COMPLEX WITH FAD AND LIPID</scope>
    <scope>COFACTOR</scope>
    <scope>SUBUNIT</scope>
</reference>
<organism>
    <name type="scientific">Thermoplasma acidophilum (strain ATCC 25905 / DSM 1728 / JCM 9062 / NBRC 15155 / AMRC-C165)</name>
    <dbReference type="NCBI Taxonomy" id="273075"/>
    <lineage>
        <taxon>Archaea</taxon>
        <taxon>Methanobacteriati</taxon>
        <taxon>Thermoplasmatota</taxon>
        <taxon>Thermoplasmata</taxon>
        <taxon>Thermoplasmatales</taxon>
        <taxon>Thermoplasmataceae</taxon>
        <taxon>Thermoplasma</taxon>
    </lineage>
</organism>
<name>GGR_THEAC</name>
<gene>
    <name type="ordered locus">Ta0516</name>
</gene>